<feature type="chain" id="PRO_0000270180" description="Src kinase-associated phosphoprotein 2">
    <location>
        <begin position="1"/>
        <end position="358"/>
    </location>
</feature>
<feature type="domain" description="PH" evidence="4">
    <location>
        <begin position="116"/>
        <end position="219"/>
    </location>
</feature>
<feature type="domain" description="SH3" evidence="5">
    <location>
        <begin position="296"/>
        <end position="357"/>
    </location>
</feature>
<feature type="region of interest" description="Homodimerization">
    <location>
        <begin position="14"/>
        <end position="64"/>
    </location>
</feature>
<feature type="region of interest" description="Disordered" evidence="6">
    <location>
        <begin position="232"/>
        <end position="292"/>
    </location>
</feature>
<feature type="compositionally biased region" description="Acidic residues" evidence="6">
    <location>
        <begin position="255"/>
        <end position="270"/>
    </location>
</feature>
<feature type="compositionally biased region" description="Basic and acidic residues" evidence="6">
    <location>
        <begin position="274"/>
        <end position="292"/>
    </location>
</feature>
<feature type="modified residue" description="Phosphoserine" evidence="2">
    <location>
        <position position="5"/>
    </location>
</feature>
<feature type="modified residue" description="Phosphoserine" evidence="3">
    <location>
        <position position="9"/>
    </location>
</feature>
<feature type="modified residue" description="Phosphotyrosine" evidence="15 16">
    <location>
        <position position="75"/>
    </location>
</feature>
<feature type="modified residue" description="Phosphoserine" evidence="3">
    <location>
        <position position="87"/>
    </location>
</feature>
<feature type="modified residue" description="Phosphoserine" evidence="3">
    <location>
        <position position="90"/>
    </location>
</feature>
<feature type="modified residue" description="Phosphotyrosine" evidence="16">
    <location>
        <position position="151"/>
    </location>
</feature>
<feature type="modified residue" description="Phosphotyrosine" evidence="2">
    <location>
        <position position="197"/>
    </location>
</feature>
<feature type="modified residue" description="Phosphoserine" evidence="3">
    <location>
        <position position="223"/>
    </location>
</feature>
<feature type="modified residue" description="Phosphotyrosine; by FYN" evidence="7 15 16">
    <location>
        <position position="260"/>
    </location>
</feature>
<feature type="modified residue" description="Phosphoserine" evidence="3">
    <location>
        <position position="272"/>
    </location>
</feature>
<feature type="modified residue" description="Phosphoserine" evidence="3">
    <location>
        <position position="282"/>
    </location>
</feature>
<feature type="modified residue" description="Phosphoserine" evidence="3">
    <location>
        <position position="285"/>
    </location>
</feature>
<feature type="splice variant" id="VSP_022184" description="In isoform 2." evidence="13">
    <location>
        <begin position="22"/>
        <end position="28"/>
    </location>
</feature>
<feature type="mutagenesis site" description="Abolishes interaction with FYN, phosphorylation by FYN, and effects on cell growth." evidence="7">
    <original>Y</original>
    <variation>F</variation>
    <location>
        <position position="260"/>
    </location>
</feature>
<feature type="sequence conflict" description="In Ref. 4; BAE25817." evidence="14" ref="4">
    <original>E</original>
    <variation>K</variation>
    <location>
        <position position="16"/>
    </location>
</feature>
<feature type="sequence conflict" description="In Ref. 7; AA sequence." evidence="14" ref="7">
    <original>N</original>
    <variation>P</variation>
    <location>
        <position position="104"/>
    </location>
</feature>
<feature type="helix" evidence="17">
    <location>
        <begin position="15"/>
        <end position="29"/>
    </location>
</feature>
<feature type="turn" evidence="17">
    <location>
        <begin position="30"/>
        <end position="34"/>
    </location>
</feature>
<feature type="helix" evidence="17">
    <location>
        <begin position="39"/>
        <end position="55"/>
    </location>
</feature>
<feature type="helix" evidence="17">
    <location>
        <begin position="56"/>
        <end position="59"/>
    </location>
</feature>
<feature type="helix" evidence="17">
    <location>
        <begin position="61"/>
        <end position="63"/>
    </location>
</feature>
<feature type="helix" evidence="18">
    <location>
        <begin position="111"/>
        <end position="113"/>
    </location>
</feature>
<feature type="strand" evidence="18">
    <location>
        <begin position="115"/>
        <end position="126"/>
    </location>
</feature>
<feature type="strand" evidence="19">
    <location>
        <begin position="128"/>
        <end position="130"/>
    </location>
</feature>
<feature type="turn" evidence="17">
    <location>
        <begin position="132"/>
        <end position="134"/>
    </location>
</feature>
<feature type="strand" evidence="18">
    <location>
        <begin position="136"/>
        <end position="145"/>
    </location>
</feature>
<feature type="strand" evidence="18">
    <location>
        <begin position="148"/>
        <end position="154"/>
    </location>
</feature>
<feature type="strand" evidence="18">
    <location>
        <begin position="161"/>
        <end position="165"/>
    </location>
</feature>
<feature type="strand" evidence="18">
    <location>
        <begin position="170"/>
        <end position="173"/>
    </location>
</feature>
<feature type="helix" evidence="17">
    <location>
        <begin position="175"/>
        <end position="177"/>
    </location>
</feature>
<feature type="helix" evidence="18">
    <location>
        <begin position="183"/>
        <end position="185"/>
    </location>
</feature>
<feature type="strand" evidence="18">
    <location>
        <begin position="186"/>
        <end position="190"/>
    </location>
</feature>
<feature type="strand" evidence="17">
    <location>
        <begin position="192"/>
        <end position="194"/>
    </location>
</feature>
<feature type="strand" evidence="18">
    <location>
        <begin position="196"/>
        <end position="200"/>
    </location>
</feature>
<feature type="helix" evidence="18">
    <location>
        <begin position="204"/>
        <end position="217"/>
    </location>
</feature>
<accession>Q3UND0</accession>
<accession>Q8BK74</accession>
<accession>Q9Z2K4</accession>
<gene>
    <name type="primary">Skap2</name>
    <name type="synonym">Prap</name>
    <name type="synonym">Ra70</name>
    <name type="synonym">Saps</name>
    <name type="synonym">Scap2</name>
    <name type="synonym">Skap55r</name>
</gene>
<name>SKAP2_MOUSE</name>
<comment type="function">
    <text evidence="7 10 11">May be involved in B-cell and macrophage adhesion processes. In B-cells, may act by coupling the B-cell receptor (BCR) to integrin activation. May play a role in src signaling pathway.</text>
</comment>
<comment type="subunit">
    <text evidence="1 8">Interacts with LAT, GRB2, PTK2B and PRAM1 (By similarity). Homodimer. Interacts with FYB1, which is required for SKAP2 protein stability. Interacts with PTPNS1. Part of a complex consisting of SKAP2, FYB1 and PTPNS1 (PubMed:11207596). Part of a complex consisting of SKAP2, FYB1 and PIRB (PubMed:11207596). May interact with actin. May interact with FYN, HCK and LYN. Interacts with FASLG (By similarity).</text>
</comment>
<comment type="interaction">
    <interactant intactId="EBI-642769">
        <id>Q3UND0</id>
    </interactant>
    <interactant intactId="EBI-1211241">
        <id>Q9Y2R2</id>
        <label>PTPN22</label>
    </interactant>
    <organismsDiffer>true</organismsDiffer>
    <experiments>2</experiments>
</comment>
<comment type="subcellular location">
    <subcellularLocation>
        <location evidence="7 9 12">Cytoplasm</location>
    </subcellularLocation>
    <text>Membrane ruffles of macrophages. Perikarya and dendrites from neurons.</text>
</comment>
<comment type="alternative products">
    <event type="alternative splicing"/>
    <isoform>
        <id>Q3UND0-1</id>
        <name>1</name>
        <sequence type="displayed"/>
    </isoform>
    <isoform>
        <id>Q3UND0-2</id>
        <name>2</name>
        <sequence type="described" ref="VSP_022184"/>
    </isoform>
</comment>
<comment type="tissue specificity">
    <text evidence="7 9 10 11">Expressed in kidney, lung, liver, spleen, bone marrow and testis. Present in T-cells, B-cells, and all cells of the myelomonocytic lineage. Present in all brain regions, with highest levels in neurons from the Purkinje cell layer, hippocampal gyrus, cortex and substantia nigra (at protein level).</text>
</comment>
<comment type="induction">
    <text evidence="7">By IL-6 in myeloid cells.</text>
</comment>
<comment type="domain">
    <text evidence="1">The SH3 domain interacts with FYB1 and PTK2B.</text>
</comment>
<comment type="PTM">
    <text evidence="1 7 8 10">Dephosphorylated on Tyr-75 by PTPN22 (By similarity). Phosphorylated by FYN on Tyr-260. In case of infection with Y.pseudotuberculosis, dephosphorylated by bacterial phosphatase yopH.</text>
</comment>
<comment type="disruption phenotype">
    <text evidence="11">Mice are healthy and do not display any obvious abnormality. They have normal T-cell, platelet and macrophage function, but show reduced levels of spontaneous immunoglobulins in the serum, and defects in B-cell proliferation.</text>
</comment>
<comment type="similarity">
    <text evidence="14">Belongs to the SKAP family.</text>
</comment>
<reference key="1">
    <citation type="journal article" date="2000" name="Exp. Hematol.">
        <title>Adaptor protein SKAP55R is associated with myeloid differentiation and growth arrest.</title>
        <authorList>
            <person name="Curtis D.J."/>
            <person name="Jane S.M."/>
            <person name="Hilton D.J."/>
            <person name="Dougherty L."/>
            <person name="Bodine D.M."/>
            <person name="Begley C.G."/>
        </authorList>
    </citation>
    <scope>NUCLEOTIDE SEQUENCE [MRNA] (ISOFORM 1)</scope>
    <scope>TISSUE SPECIFICITY</scope>
    <scope>SUBCELLULAR LOCATION</scope>
    <scope>INDUCTION</scope>
    <scope>POSSIBLE INTERACTION WITH FYN; HCK AND LYN</scope>
    <scope>PHOSPHORYLATION AT TYR-260</scope>
    <scope>MUTAGENESIS OF TYR-260</scope>
    <scope>FUNCTION</scope>
    <source>
        <tissue>Testis</tissue>
    </source>
</reference>
<reference key="2">
    <citation type="submission" date="1998-02" db="EMBL/GenBank/DDBJ databases">
        <title>Mouse Saps, Src-associated adaptor protein with PH and SH3 domain.</title>
        <authorList>
            <person name="Lee J.-S."/>
            <person name="Suh K.S."/>
            <person name="Burr J.G."/>
        </authorList>
    </citation>
    <scope>NUCLEOTIDE SEQUENCE [MRNA] (ISOFORM 1)</scope>
    <source>
        <tissue>Liver</tissue>
    </source>
</reference>
<reference key="3">
    <citation type="submission" date="1998-05" db="EMBL/GenBank/DDBJ databases">
        <title>RA70, retinoic acid responsive gene, is expressed specifically in spermatocyte in mouse testis.</title>
        <authorList>
            <person name="Momoi T."/>
            <person name="Urase K."/>
            <person name="Mukasa T."/>
            <person name="Fujita E."/>
            <person name="Kouroku Y."/>
            <person name="Miho Y."/>
            <person name="Soyama A."/>
            <person name="Momoi M.Y."/>
        </authorList>
    </citation>
    <scope>NUCLEOTIDE SEQUENCE [MRNA] (ISOFORM 1)</scope>
    <source>
        <tissue>Testis</tissue>
    </source>
</reference>
<reference key="4">
    <citation type="journal article" date="2005" name="Science">
        <title>The transcriptional landscape of the mammalian genome.</title>
        <authorList>
            <person name="Carninci P."/>
            <person name="Kasukawa T."/>
            <person name="Katayama S."/>
            <person name="Gough J."/>
            <person name="Frith M.C."/>
            <person name="Maeda N."/>
            <person name="Oyama R."/>
            <person name="Ravasi T."/>
            <person name="Lenhard B."/>
            <person name="Wells C."/>
            <person name="Kodzius R."/>
            <person name="Shimokawa K."/>
            <person name="Bajic V.B."/>
            <person name="Brenner S.E."/>
            <person name="Batalov S."/>
            <person name="Forrest A.R."/>
            <person name="Zavolan M."/>
            <person name="Davis M.J."/>
            <person name="Wilming L.G."/>
            <person name="Aidinis V."/>
            <person name="Allen J.E."/>
            <person name="Ambesi-Impiombato A."/>
            <person name="Apweiler R."/>
            <person name="Aturaliya R.N."/>
            <person name="Bailey T.L."/>
            <person name="Bansal M."/>
            <person name="Baxter L."/>
            <person name="Beisel K.W."/>
            <person name="Bersano T."/>
            <person name="Bono H."/>
            <person name="Chalk A.M."/>
            <person name="Chiu K.P."/>
            <person name="Choudhary V."/>
            <person name="Christoffels A."/>
            <person name="Clutterbuck D.R."/>
            <person name="Crowe M.L."/>
            <person name="Dalla E."/>
            <person name="Dalrymple B.P."/>
            <person name="de Bono B."/>
            <person name="Della Gatta G."/>
            <person name="di Bernardo D."/>
            <person name="Down T."/>
            <person name="Engstrom P."/>
            <person name="Fagiolini M."/>
            <person name="Faulkner G."/>
            <person name="Fletcher C.F."/>
            <person name="Fukushima T."/>
            <person name="Furuno M."/>
            <person name="Futaki S."/>
            <person name="Gariboldi M."/>
            <person name="Georgii-Hemming P."/>
            <person name="Gingeras T.R."/>
            <person name="Gojobori T."/>
            <person name="Green R.E."/>
            <person name="Gustincich S."/>
            <person name="Harbers M."/>
            <person name="Hayashi Y."/>
            <person name="Hensch T.K."/>
            <person name="Hirokawa N."/>
            <person name="Hill D."/>
            <person name="Huminiecki L."/>
            <person name="Iacono M."/>
            <person name="Ikeo K."/>
            <person name="Iwama A."/>
            <person name="Ishikawa T."/>
            <person name="Jakt M."/>
            <person name="Kanapin A."/>
            <person name="Katoh M."/>
            <person name="Kawasawa Y."/>
            <person name="Kelso J."/>
            <person name="Kitamura H."/>
            <person name="Kitano H."/>
            <person name="Kollias G."/>
            <person name="Krishnan S.P."/>
            <person name="Kruger A."/>
            <person name="Kummerfeld S.K."/>
            <person name="Kurochkin I.V."/>
            <person name="Lareau L.F."/>
            <person name="Lazarevic D."/>
            <person name="Lipovich L."/>
            <person name="Liu J."/>
            <person name="Liuni S."/>
            <person name="McWilliam S."/>
            <person name="Madan Babu M."/>
            <person name="Madera M."/>
            <person name="Marchionni L."/>
            <person name="Matsuda H."/>
            <person name="Matsuzawa S."/>
            <person name="Miki H."/>
            <person name="Mignone F."/>
            <person name="Miyake S."/>
            <person name="Morris K."/>
            <person name="Mottagui-Tabar S."/>
            <person name="Mulder N."/>
            <person name="Nakano N."/>
            <person name="Nakauchi H."/>
            <person name="Ng P."/>
            <person name="Nilsson R."/>
            <person name="Nishiguchi S."/>
            <person name="Nishikawa S."/>
            <person name="Nori F."/>
            <person name="Ohara O."/>
            <person name="Okazaki Y."/>
            <person name="Orlando V."/>
            <person name="Pang K.C."/>
            <person name="Pavan W.J."/>
            <person name="Pavesi G."/>
            <person name="Pesole G."/>
            <person name="Petrovsky N."/>
            <person name="Piazza S."/>
            <person name="Reed J."/>
            <person name="Reid J.F."/>
            <person name="Ring B.Z."/>
            <person name="Ringwald M."/>
            <person name="Rost B."/>
            <person name="Ruan Y."/>
            <person name="Salzberg S.L."/>
            <person name="Sandelin A."/>
            <person name="Schneider C."/>
            <person name="Schoenbach C."/>
            <person name="Sekiguchi K."/>
            <person name="Semple C.A."/>
            <person name="Seno S."/>
            <person name="Sessa L."/>
            <person name="Sheng Y."/>
            <person name="Shibata Y."/>
            <person name="Shimada H."/>
            <person name="Shimada K."/>
            <person name="Silva D."/>
            <person name="Sinclair B."/>
            <person name="Sperling S."/>
            <person name="Stupka E."/>
            <person name="Sugiura K."/>
            <person name="Sultana R."/>
            <person name="Takenaka Y."/>
            <person name="Taki K."/>
            <person name="Tammoja K."/>
            <person name="Tan S.L."/>
            <person name="Tang S."/>
            <person name="Taylor M.S."/>
            <person name="Tegner J."/>
            <person name="Teichmann S.A."/>
            <person name="Ueda H.R."/>
            <person name="van Nimwegen E."/>
            <person name="Verardo R."/>
            <person name="Wei C.L."/>
            <person name="Yagi K."/>
            <person name="Yamanishi H."/>
            <person name="Zabarovsky E."/>
            <person name="Zhu S."/>
            <person name="Zimmer A."/>
            <person name="Hide W."/>
            <person name="Bult C."/>
            <person name="Grimmond S.M."/>
            <person name="Teasdale R.D."/>
            <person name="Liu E.T."/>
            <person name="Brusic V."/>
            <person name="Quackenbush J."/>
            <person name="Wahlestedt C."/>
            <person name="Mattick J.S."/>
            <person name="Hume D.A."/>
            <person name="Kai C."/>
            <person name="Sasaki D."/>
            <person name="Tomaru Y."/>
            <person name="Fukuda S."/>
            <person name="Kanamori-Katayama M."/>
            <person name="Suzuki M."/>
            <person name="Aoki J."/>
            <person name="Arakawa T."/>
            <person name="Iida J."/>
            <person name="Imamura K."/>
            <person name="Itoh M."/>
            <person name="Kato T."/>
            <person name="Kawaji H."/>
            <person name="Kawagashira N."/>
            <person name="Kawashima T."/>
            <person name="Kojima M."/>
            <person name="Kondo S."/>
            <person name="Konno H."/>
            <person name="Nakano K."/>
            <person name="Ninomiya N."/>
            <person name="Nishio T."/>
            <person name="Okada M."/>
            <person name="Plessy C."/>
            <person name="Shibata K."/>
            <person name="Shiraki T."/>
            <person name="Suzuki S."/>
            <person name="Tagami M."/>
            <person name="Waki K."/>
            <person name="Watahiki A."/>
            <person name="Okamura-Oho Y."/>
            <person name="Suzuki H."/>
            <person name="Kawai J."/>
            <person name="Hayashizaki Y."/>
        </authorList>
    </citation>
    <scope>NUCLEOTIDE SEQUENCE [LARGE SCALE MRNA] (ISOFORM 1)</scope>
    <source>
        <strain>C57BL/6J</strain>
        <tissue>Lymph node</tissue>
    </source>
</reference>
<reference key="5">
    <citation type="journal article" date="2004" name="Genome Res.">
        <title>The status, quality, and expansion of the NIH full-length cDNA project: the Mammalian Gene Collection (MGC).</title>
        <authorList>
            <consortium name="The MGC Project Team"/>
        </authorList>
    </citation>
    <scope>NUCLEOTIDE SEQUENCE [LARGE SCALE MRNA] (ISOFORMS 1 AND 2)</scope>
</reference>
<reference key="6">
    <citation type="journal article" date="1998" name="FEBS Lett.">
        <title>SKAP-HOM, a novel adaptor protein homologous to the FYN-associated protein SKAP55.</title>
        <authorList>
            <person name="Marie-Cardine A."/>
            <person name="Verhagen A.M."/>
            <person name="Eckerskorn C."/>
            <person name="Schraven B."/>
        </authorList>
    </citation>
    <scope>PROTEIN SEQUENCE OF 1-12</scope>
    <source>
        <tissue>T-cell</tissue>
    </source>
</reference>
<reference key="7">
    <citation type="journal article" date="2000" name="Cell. Microbiol.">
        <title>The Yersinia tyrosine phosphatase YopH targets a novel adhesion-regulated signalling complex in macrophages.</title>
        <authorList>
            <person name="Black D.S."/>
            <person name="Marie-Cardine A."/>
            <person name="Schraven B."/>
            <person name="Bliska J.B."/>
        </authorList>
    </citation>
    <scope>PROTEIN SEQUENCE OF 93-114; 129-139 AND 147-158</scope>
    <scope>PHOSPHORYLATION</scope>
    <scope>INTERACTION WITH FYB1</scope>
    <scope>IDENTIFICATION IN A COMPLEX WITH FYB1 AND PTPNS1</scope>
    <scope>IDENTIFICATION IN A COMPLEX WITH FYB1 AND PIRB</scope>
</reference>
<reference key="8">
    <citation type="journal article" date="1999" name="Curr. Biol.">
        <title>SHPS-1 is a scaffold for assembling distinct adhesion-regulated multi-protein complexes in macrophages.</title>
        <authorList>
            <person name="Timms J.F."/>
            <person name="Swanson K.D."/>
            <person name="Marie-Cardine A."/>
            <person name="Raab M."/>
            <person name="Rudd C.E."/>
            <person name="Schraven B."/>
            <person name="Neel B.G."/>
        </authorList>
    </citation>
    <scope>INTERACTION WITH PTPNS1</scope>
    <scope>IDENTIFICATION IN A COMPLEX WITH FYB1 AND PTPNS1</scope>
</reference>
<reference key="9">
    <citation type="journal article" date="2003" name="J. Biol. Chem.">
        <title>Identification and characterization of a novel Pyk2/related adhesion focal tyrosine kinase-associated protein that inhibits alpha-synuclein phosphorylation.</title>
        <authorList>
            <person name="Takahashi T."/>
            <person name="Yamashita H."/>
            <person name="Nagano Y."/>
            <person name="Nakamura T."/>
            <person name="Ohmori H."/>
            <person name="Avraham H."/>
            <person name="Avraham S."/>
            <person name="Yasuda M."/>
            <person name="Matsumoto M."/>
        </authorList>
    </citation>
    <scope>SUBCELLULAR LOCATION</scope>
    <scope>TISSUE SPECIFICITY</scope>
</reference>
<reference key="10">
    <citation type="journal article" date="2005" name="Cell. Signal.">
        <title>Macrophage colony-stimulating factor receptor induces tyrosine phosphorylation of SKAP55R adaptor and its association with actin.</title>
        <authorList>
            <person name="Bourette R.P."/>
            <person name="Therier J."/>
            <person name="Mouchiroud G."/>
        </authorList>
    </citation>
    <scope>TISSUE SPECIFICITY</scope>
    <scope>PHOSPHORYLATION</scope>
    <scope>INTERACTION WITH ACTIN</scope>
    <scope>FUNCTION</scope>
</reference>
<reference key="11">
    <citation type="journal article" date="2005" name="Mol. Cell. Biol.">
        <title>Regulation of in vitro and in vivo immune functions by the cytosolic adaptor protein SKAP-HOM.</title>
        <authorList>
            <person name="Togni M."/>
            <person name="Swanson K.D."/>
            <person name="Reimann S."/>
            <person name="Kliche S."/>
            <person name="Pearce A.C."/>
            <person name="Simeoni L."/>
            <person name="Reinhold D."/>
            <person name="Wienands J."/>
            <person name="Neel B.G."/>
            <person name="Schraven B."/>
            <person name="Gerber A."/>
        </authorList>
    </citation>
    <scope>FUNCTION</scope>
    <scope>TISSUE SPECIFICITY</scope>
    <scope>DISRUPTION PHENOTYPE</scope>
</reference>
<reference key="12">
    <citation type="journal article" date="2005" name="Nat. Biotechnol.">
        <title>Immunoaffinity profiling of tyrosine phosphorylation in cancer cells.</title>
        <authorList>
            <person name="Rush J."/>
            <person name="Moritz A."/>
            <person name="Lee K.A."/>
            <person name="Guo A."/>
            <person name="Goss V.L."/>
            <person name="Spek E.J."/>
            <person name="Zhang H."/>
            <person name="Zha X.-M."/>
            <person name="Polakiewicz R.D."/>
            <person name="Comb M.J."/>
        </authorList>
    </citation>
    <scope>PHOSPHORYLATION [LARGE SCALE ANALYSIS] AT TYR-75 AND TYR-260</scope>
    <scope>IDENTIFICATION BY MASS SPECTROMETRY [LARGE SCALE ANALYSIS]</scope>
</reference>
<reference key="13">
    <citation type="journal article" date="2007" name="Blood">
        <title>ADAP is required for normal alphaIIb-beta3 activation by VWF/GP Ib-IX-V and other agonists.</title>
        <authorList>
            <person name="Kasirer-Friede A."/>
            <person name="Moran B."/>
            <person name="Nagrampa-Orje J."/>
            <person name="Swanson K."/>
            <person name="Ruggeri Z.M."/>
            <person name="Schraven B."/>
            <person name="Neel B.G."/>
            <person name="Koretzky G."/>
            <person name="Shattil S.J."/>
        </authorList>
    </citation>
    <scope>INTERACTION WITH FYB1</scope>
</reference>
<reference key="14">
    <citation type="journal article" date="2007" name="J. Immunol.">
        <title>Quantitative time-resolved phosphoproteomic analysis of mast cell signaling.</title>
        <authorList>
            <person name="Cao L."/>
            <person name="Yu K."/>
            <person name="Banh C."/>
            <person name="Nguyen V."/>
            <person name="Ritz A."/>
            <person name="Raphael B.J."/>
            <person name="Kawakami Y."/>
            <person name="Kawakami T."/>
            <person name="Salomon A.R."/>
        </authorList>
    </citation>
    <scope>PHOSPHORYLATION [LARGE SCALE ANALYSIS] AT TYR-75; TYR-151 AND TYR-260</scope>
    <scope>IDENTIFICATION BY MASS SPECTROMETRY [LARGE SCALE ANALYSIS]</scope>
    <source>
        <tissue>Mast cell</tissue>
    </source>
</reference>
<reference key="15">
    <citation type="journal article" date="2010" name="Cell">
        <title>A tissue-specific atlas of mouse protein phosphorylation and expression.</title>
        <authorList>
            <person name="Huttlin E.L."/>
            <person name="Jedrychowski M.P."/>
            <person name="Elias J.E."/>
            <person name="Goswami T."/>
            <person name="Rad R."/>
            <person name="Beausoleil S.A."/>
            <person name="Villen J."/>
            <person name="Haas W."/>
            <person name="Sowa M.E."/>
            <person name="Gygi S.P."/>
        </authorList>
    </citation>
    <scope>IDENTIFICATION BY MASS SPECTROMETRY [LARGE SCALE ANALYSIS]</scope>
    <source>
        <tissue>Spleen</tissue>
    </source>
</reference>
<reference key="16">
    <citation type="journal article" date="2008" name="Mol. Cell">
        <title>The Skap-hom dimerization and PH domains comprise a 3'-phosphoinositide-gated molecular switch.</title>
        <authorList>
            <person name="Swanson K.D."/>
            <person name="Tang Y."/>
            <person name="Ceccarelli D.F."/>
            <person name="Poy F."/>
            <person name="Sliwa J.P."/>
            <person name="Neel B.G."/>
            <person name="Eck M.J."/>
        </authorList>
    </citation>
    <scope>X-RAY CRYSTALLOGRAPHY (2.6 ANGSTROMS) OF 14-222</scope>
    <scope>SUBUNIT</scope>
    <scope>SUBCELLULAR LOCATION</scope>
</reference>
<evidence type="ECO:0000250" key="1"/>
<evidence type="ECO:0000250" key="2">
    <source>
        <dbReference type="UniProtKB" id="O75563"/>
    </source>
</evidence>
<evidence type="ECO:0000250" key="3">
    <source>
        <dbReference type="UniProtKB" id="Q920G0"/>
    </source>
</evidence>
<evidence type="ECO:0000255" key="4">
    <source>
        <dbReference type="PROSITE-ProRule" id="PRU00145"/>
    </source>
</evidence>
<evidence type="ECO:0000255" key="5">
    <source>
        <dbReference type="PROSITE-ProRule" id="PRU00192"/>
    </source>
</evidence>
<evidence type="ECO:0000256" key="6">
    <source>
        <dbReference type="SAM" id="MobiDB-lite"/>
    </source>
</evidence>
<evidence type="ECO:0000269" key="7">
    <source>
    </source>
</evidence>
<evidence type="ECO:0000269" key="8">
    <source>
    </source>
</evidence>
<evidence type="ECO:0000269" key="9">
    <source>
    </source>
</evidence>
<evidence type="ECO:0000269" key="10">
    <source>
    </source>
</evidence>
<evidence type="ECO:0000269" key="11">
    <source>
    </source>
</evidence>
<evidence type="ECO:0000269" key="12">
    <source>
    </source>
</evidence>
<evidence type="ECO:0000303" key="13">
    <source>
    </source>
</evidence>
<evidence type="ECO:0000305" key="14"/>
<evidence type="ECO:0007744" key="15">
    <source>
    </source>
</evidence>
<evidence type="ECO:0007744" key="16">
    <source>
    </source>
</evidence>
<evidence type="ECO:0007829" key="17">
    <source>
        <dbReference type="PDB" id="1U5E"/>
    </source>
</evidence>
<evidence type="ECO:0007829" key="18">
    <source>
        <dbReference type="PDB" id="1U5F"/>
    </source>
</evidence>
<evidence type="ECO:0007829" key="19">
    <source>
        <dbReference type="PDB" id="1U5G"/>
    </source>
</evidence>
<protein>
    <recommendedName>
        <fullName>Src kinase-associated phosphoprotein 2</fullName>
    </recommendedName>
    <alternativeName>
        <fullName>Pyk2/RAFTK-associated protein</fullName>
    </alternativeName>
    <alternativeName>
        <fullName>SKAP55 homolog</fullName>
        <shortName>SKAP-HOM</shortName>
    </alternativeName>
    <alternativeName>
        <fullName>Src family-associated phosphoprotein 2</fullName>
    </alternativeName>
    <alternativeName>
        <fullName>Src kinase-associated phosphoprotein 55-related protein</fullName>
    </alternativeName>
    <alternativeName>
        <fullName>Src-associated adapter protein with PH and SH3 domains</fullName>
    </alternativeName>
</protein>
<proteinExistence type="evidence at protein level"/>
<dbReference type="EMBL" id="AF051324">
    <property type="protein sequence ID" value="AAC99297.1"/>
    <property type="molecule type" value="mRNA"/>
</dbReference>
<dbReference type="EMBL" id="AB014485">
    <property type="protein sequence ID" value="BAA77253.1"/>
    <property type="molecule type" value="mRNA"/>
</dbReference>
<dbReference type="EMBL" id="AK076000">
    <property type="protein sequence ID" value="BAC36111.1"/>
    <property type="molecule type" value="mRNA"/>
</dbReference>
<dbReference type="EMBL" id="AK144289">
    <property type="protein sequence ID" value="BAE25817.1"/>
    <property type="molecule type" value="mRNA"/>
</dbReference>
<dbReference type="EMBL" id="BC003711">
    <property type="protein sequence ID" value="AAH03711.1"/>
    <property type="molecule type" value="mRNA"/>
</dbReference>
<dbReference type="CCDS" id="CCDS20137.1">
    <molecule id="Q3UND0-1"/>
</dbReference>
<dbReference type="RefSeq" id="NP_061243.1">
    <molecule id="Q3UND0-1"/>
    <property type="nucleotide sequence ID" value="NM_018773.2"/>
</dbReference>
<dbReference type="PDB" id="1M0V">
    <property type="method" value="NMR"/>
    <property type="chains" value="B=73-79"/>
</dbReference>
<dbReference type="PDB" id="1U5E">
    <property type="method" value="X-ray"/>
    <property type="resolution" value="2.60 A"/>
    <property type="chains" value="A/B=14-222"/>
</dbReference>
<dbReference type="PDB" id="1U5F">
    <property type="method" value="X-ray"/>
    <property type="resolution" value="1.90 A"/>
    <property type="chains" value="A=111-248"/>
</dbReference>
<dbReference type="PDB" id="1U5G">
    <property type="method" value="X-ray"/>
    <property type="resolution" value="2.10 A"/>
    <property type="chains" value="A/B/C/D=103-222"/>
</dbReference>
<dbReference type="PDB" id="2OTX">
    <property type="method" value="X-ray"/>
    <property type="resolution" value="2.60 A"/>
    <property type="chains" value="A/B=12-222"/>
</dbReference>
<dbReference type="PDBsum" id="1M0V"/>
<dbReference type="PDBsum" id="1U5E"/>
<dbReference type="PDBsum" id="1U5F"/>
<dbReference type="PDBsum" id="1U5G"/>
<dbReference type="PDBsum" id="2OTX"/>
<dbReference type="SMR" id="Q3UND0"/>
<dbReference type="BioGRID" id="207619">
    <property type="interactions" value="2"/>
</dbReference>
<dbReference type="CORUM" id="Q3UND0"/>
<dbReference type="FunCoup" id="Q3UND0">
    <property type="interactions" value="1839"/>
</dbReference>
<dbReference type="IntAct" id="Q3UND0">
    <property type="interactions" value="3"/>
</dbReference>
<dbReference type="MINT" id="Q3UND0"/>
<dbReference type="STRING" id="10090.ENSMUSP00000145462"/>
<dbReference type="GlyGen" id="Q3UND0">
    <property type="glycosylation" value="1 site, 1 O-linked glycan (1 site)"/>
</dbReference>
<dbReference type="iPTMnet" id="Q3UND0"/>
<dbReference type="PhosphoSitePlus" id="Q3UND0"/>
<dbReference type="jPOST" id="Q3UND0"/>
<dbReference type="PaxDb" id="10090-ENSMUSP00000077342"/>
<dbReference type="PeptideAtlas" id="Q3UND0"/>
<dbReference type="ProteomicsDB" id="261181">
    <molecule id="Q3UND0-1"/>
</dbReference>
<dbReference type="ProteomicsDB" id="261182">
    <molecule id="Q3UND0-2"/>
</dbReference>
<dbReference type="Antibodypedia" id="25901">
    <property type="antibodies" value="226 antibodies from 32 providers"/>
</dbReference>
<dbReference type="DNASU" id="54353"/>
<dbReference type="Ensembl" id="ENSMUST00000078214.8">
    <molecule id="Q3UND0-2"/>
    <property type="protein sequence ID" value="ENSMUSP00000077342.7"/>
    <property type="gene ID" value="ENSMUSG00000059182.9"/>
</dbReference>
<dbReference type="Ensembl" id="ENSMUST00000204778.3">
    <molecule id="Q3UND0-1"/>
    <property type="protein sequence ID" value="ENSMUSP00000145462.2"/>
    <property type="gene ID" value="ENSMUSG00000059182.9"/>
</dbReference>
<dbReference type="GeneID" id="54353"/>
<dbReference type="KEGG" id="mmu:54353"/>
<dbReference type="UCSC" id="uc009bxv.1">
    <molecule id="Q3UND0-1"/>
    <property type="organism name" value="mouse"/>
</dbReference>
<dbReference type="UCSC" id="uc009bxw.1">
    <molecule id="Q3UND0-2"/>
    <property type="organism name" value="mouse"/>
</dbReference>
<dbReference type="AGR" id="MGI:1889206"/>
<dbReference type="CTD" id="8935"/>
<dbReference type="MGI" id="MGI:1889206">
    <property type="gene designation" value="Skap2"/>
</dbReference>
<dbReference type="VEuPathDB" id="HostDB:ENSMUSG00000059182"/>
<dbReference type="eggNOG" id="ENOG502QVFD">
    <property type="taxonomic scope" value="Eukaryota"/>
</dbReference>
<dbReference type="GeneTree" id="ENSGT00390000017856"/>
<dbReference type="HOGENOM" id="CLU_062032_0_0_1"/>
<dbReference type="InParanoid" id="Q3UND0"/>
<dbReference type="OMA" id="ASDRCDK"/>
<dbReference type="OrthoDB" id="243840at2759"/>
<dbReference type="PhylomeDB" id="Q3UND0"/>
<dbReference type="TreeFam" id="TF331055"/>
<dbReference type="Reactome" id="R-MMU-391160">
    <property type="pathway name" value="Signal regulatory protein family interactions"/>
</dbReference>
<dbReference type="BioGRID-ORCS" id="54353">
    <property type="hits" value="5 hits in 77 CRISPR screens"/>
</dbReference>
<dbReference type="ChiTaRS" id="Skap2">
    <property type="organism name" value="mouse"/>
</dbReference>
<dbReference type="EvolutionaryTrace" id="Q3UND0"/>
<dbReference type="PRO" id="PR:Q3UND0"/>
<dbReference type="Proteomes" id="UP000000589">
    <property type="component" value="Chromosome 6"/>
</dbReference>
<dbReference type="RNAct" id="Q3UND0">
    <property type="molecule type" value="protein"/>
</dbReference>
<dbReference type="Bgee" id="ENSMUSG00000059182">
    <property type="expression patterns" value="Expressed in animal zygote and 262 other cell types or tissues"/>
</dbReference>
<dbReference type="ExpressionAtlas" id="Q3UND0">
    <property type="expression patterns" value="baseline and differential"/>
</dbReference>
<dbReference type="GO" id="GO:0005737">
    <property type="term" value="C:cytoplasm"/>
    <property type="evidence" value="ECO:0000314"/>
    <property type="project" value="MGI"/>
</dbReference>
<dbReference type="GO" id="GO:0005829">
    <property type="term" value="C:cytosol"/>
    <property type="evidence" value="ECO:0007669"/>
    <property type="project" value="Ensembl"/>
</dbReference>
<dbReference type="GO" id="GO:0005654">
    <property type="term" value="C:nucleoplasm"/>
    <property type="evidence" value="ECO:0007669"/>
    <property type="project" value="Ensembl"/>
</dbReference>
<dbReference type="GO" id="GO:0005886">
    <property type="term" value="C:plasma membrane"/>
    <property type="evidence" value="ECO:0000266"/>
    <property type="project" value="MGI"/>
</dbReference>
<dbReference type="GO" id="GO:0042113">
    <property type="term" value="P:B cell activation"/>
    <property type="evidence" value="ECO:0007669"/>
    <property type="project" value="UniProtKB-KW"/>
</dbReference>
<dbReference type="GO" id="GO:0008285">
    <property type="term" value="P:negative regulation of cell population proliferation"/>
    <property type="evidence" value="ECO:0000315"/>
    <property type="project" value="MGI"/>
</dbReference>
<dbReference type="CDD" id="cd13381">
    <property type="entry name" value="PH_Skap-hom_Skap2"/>
    <property type="match status" value="1"/>
</dbReference>
<dbReference type="DisProt" id="DP02892"/>
<dbReference type="FunFam" id="2.30.29.30:FF:000194">
    <property type="entry name" value="Putative src kinase-associated phosphoprotein 2"/>
    <property type="match status" value="1"/>
</dbReference>
<dbReference type="FunFam" id="2.30.30.40:FF:000097">
    <property type="entry name" value="Putative src kinase-associated phosphoprotein 2"/>
    <property type="match status" value="1"/>
</dbReference>
<dbReference type="Gene3D" id="6.10.250.220">
    <property type="match status" value="1"/>
</dbReference>
<dbReference type="Gene3D" id="2.30.29.30">
    <property type="entry name" value="Pleckstrin-homology domain (PH domain)/Phosphotyrosine-binding domain (PTB)"/>
    <property type="match status" value="1"/>
</dbReference>
<dbReference type="Gene3D" id="2.30.30.40">
    <property type="entry name" value="SH3 Domains"/>
    <property type="match status" value="1"/>
</dbReference>
<dbReference type="InterPro" id="IPR011993">
    <property type="entry name" value="PH-like_dom_sf"/>
</dbReference>
<dbReference type="InterPro" id="IPR001849">
    <property type="entry name" value="PH_domain"/>
</dbReference>
<dbReference type="InterPro" id="IPR036028">
    <property type="entry name" value="SH3-like_dom_sf"/>
</dbReference>
<dbReference type="InterPro" id="IPR001452">
    <property type="entry name" value="SH3_domain"/>
</dbReference>
<dbReference type="InterPro" id="IPR037781">
    <property type="entry name" value="SKAP_fam"/>
</dbReference>
<dbReference type="PANTHER" id="PTHR15129:SF2">
    <property type="entry name" value="SRC KINASE-ASSOCIATED PHOSPHOPROTEIN 2"/>
    <property type="match status" value="1"/>
</dbReference>
<dbReference type="PANTHER" id="PTHR15129">
    <property type="entry name" value="SRC-ASSOCIATED ADAPTOR PROTEIN"/>
    <property type="match status" value="1"/>
</dbReference>
<dbReference type="Pfam" id="PF00169">
    <property type="entry name" value="PH"/>
    <property type="match status" value="1"/>
</dbReference>
<dbReference type="Pfam" id="PF00018">
    <property type="entry name" value="SH3_1"/>
    <property type="match status" value="1"/>
</dbReference>
<dbReference type="PRINTS" id="PR00452">
    <property type="entry name" value="SH3DOMAIN"/>
</dbReference>
<dbReference type="SMART" id="SM00233">
    <property type="entry name" value="PH"/>
    <property type="match status" value="1"/>
</dbReference>
<dbReference type="SMART" id="SM00326">
    <property type="entry name" value="SH3"/>
    <property type="match status" value="1"/>
</dbReference>
<dbReference type="SUPFAM" id="SSF50729">
    <property type="entry name" value="PH domain-like"/>
    <property type="match status" value="1"/>
</dbReference>
<dbReference type="SUPFAM" id="SSF50044">
    <property type="entry name" value="SH3-domain"/>
    <property type="match status" value="1"/>
</dbReference>
<dbReference type="PROSITE" id="PS50003">
    <property type="entry name" value="PH_DOMAIN"/>
    <property type="match status" value="1"/>
</dbReference>
<dbReference type="PROSITE" id="PS50002">
    <property type="entry name" value="SH3"/>
    <property type="match status" value="1"/>
</dbReference>
<keyword id="KW-0002">3D-structure</keyword>
<keyword id="KW-0025">Alternative splicing</keyword>
<keyword id="KW-0075">B-cell activation</keyword>
<keyword id="KW-0963">Cytoplasm</keyword>
<keyword id="KW-0903">Direct protein sequencing</keyword>
<keyword id="KW-0597">Phosphoprotein</keyword>
<keyword id="KW-1185">Reference proteome</keyword>
<keyword id="KW-0728">SH3 domain</keyword>
<organism>
    <name type="scientific">Mus musculus</name>
    <name type="common">Mouse</name>
    <dbReference type="NCBI Taxonomy" id="10090"/>
    <lineage>
        <taxon>Eukaryota</taxon>
        <taxon>Metazoa</taxon>
        <taxon>Chordata</taxon>
        <taxon>Craniata</taxon>
        <taxon>Vertebrata</taxon>
        <taxon>Euteleostomi</taxon>
        <taxon>Mammalia</taxon>
        <taxon>Eutheria</taxon>
        <taxon>Euarchontoglires</taxon>
        <taxon>Glires</taxon>
        <taxon>Rodentia</taxon>
        <taxon>Myomorpha</taxon>
        <taxon>Muroidea</taxon>
        <taxon>Muridae</taxon>
        <taxon>Murinae</taxon>
        <taxon>Mus</taxon>
        <taxon>Mus</taxon>
    </lineage>
</organism>
<sequence>MPNPSCTSSPGPLPEEIRNLLADVETFVADTLKGENLSKKAKEKRESLIKKIKDVKSVYLQEFQDKGDAEDGDEYDDPFAGPADTISLASERYDKDDDGPSDGNQFPPIAAQDLPFVIKAGYLEKRRKDHSFLGFEWQKRWCALSKTVFYYYGSDKDKQQKGEFAIDGYDVRMNNTLRKDGKKDCCFEICAPDKRIYQFTAASPKDAEEWVQQLKFILQDLGSDVIPEDDEERGELYDDVDHPAAVSSPQRSQPIDDEIYEELPEEEEDTASVKMDEQGKGSRDSVHHTSGDKSTDYANFYQGLWDCTGALSDELSFKRGDVIYILSKEYNRYGWWVGEMKGAIGLVPKAYLMEMYDI</sequence>